<reference key="1">
    <citation type="journal article" date="2006" name="BMC Evol. Biol.">
        <title>Complete plastid genome sequences of Drimys, Liriodendron, and Piper: implications for the phylogenetic relationships of magnoliids.</title>
        <authorList>
            <person name="Cai Z."/>
            <person name="Penaflor C."/>
            <person name="Kuehl J.V."/>
            <person name="Leebens-Mack J."/>
            <person name="Carlson J.E."/>
            <person name="dePamphilis C.W."/>
            <person name="Boore J.L."/>
            <person name="Jansen R.K."/>
        </authorList>
    </citation>
    <scope>NUCLEOTIDE SEQUENCE [LARGE SCALE GENOMIC DNA]</scope>
</reference>
<keyword id="KW-0150">Chloroplast</keyword>
<keyword id="KW-0472">Membrane</keyword>
<keyword id="KW-0520">NAD</keyword>
<keyword id="KW-0521">NADP</keyword>
<keyword id="KW-0934">Plastid</keyword>
<keyword id="KW-0618">Plastoquinone</keyword>
<keyword id="KW-0874">Quinone</keyword>
<keyword id="KW-0793">Thylakoid</keyword>
<keyword id="KW-1278">Translocase</keyword>
<keyword id="KW-0812">Transmembrane</keyword>
<keyword id="KW-1133">Transmembrane helix</keyword>
<gene>
    <name evidence="1" type="primary">ndhA</name>
</gene>
<protein>
    <recommendedName>
        <fullName evidence="1">NAD(P)H-quinone oxidoreductase subunit 1, chloroplastic</fullName>
        <ecNumber evidence="1">7.1.1.-</ecNumber>
    </recommendedName>
    <alternativeName>
        <fullName evidence="1">NAD(P)H dehydrogenase subunit 1</fullName>
        <shortName evidence="1">NDH subunit 1</shortName>
    </alternativeName>
    <alternativeName>
        <fullName evidence="1">NADH-plastoquinone oxidoreductase subunit 1</fullName>
    </alternativeName>
</protein>
<feature type="chain" id="PRO_0000275586" description="NAD(P)H-quinone oxidoreductase subunit 1, chloroplastic">
    <location>
        <begin position="1"/>
        <end position="363"/>
    </location>
</feature>
<feature type="transmembrane region" description="Helical" evidence="1">
    <location>
        <begin position="30"/>
        <end position="50"/>
    </location>
</feature>
<feature type="transmembrane region" description="Helical" evidence="1">
    <location>
        <begin position="104"/>
        <end position="124"/>
    </location>
</feature>
<feature type="transmembrane region" description="Helical" evidence="1">
    <location>
        <begin position="127"/>
        <end position="147"/>
    </location>
</feature>
<feature type="transmembrane region" description="Helical" evidence="1">
    <location>
        <begin position="253"/>
        <end position="273"/>
    </location>
</feature>
<feature type="transmembrane region" description="Helical" evidence="1">
    <location>
        <begin position="300"/>
        <end position="320"/>
    </location>
</feature>
<feature type="transmembrane region" description="Helical" evidence="1">
    <location>
        <begin position="343"/>
        <end position="363"/>
    </location>
</feature>
<name>NU1C_PIPCE</name>
<comment type="function">
    <text evidence="1">NDH shuttles electrons from NAD(P)H:plastoquinone, via FMN and iron-sulfur (Fe-S) centers, to quinones in the photosynthetic chain and possibly in a chloroplast respiratory chain. The immediate electron acceptor for the enzyme in this species is believed to be plastoquinone. Couples the redox reaction to proton translocation, and thus conserves the redox energy in a proton gradient.</text>
</comment>
<comment type="catalytic activity">
    <reaction evidence="1">
        <text>a plastoquinone + NADH + (n+1) H(+)(in) = a plastoquinol + NAD(+) + n H(+)(out)</text>
        <dbReference type="Rhea" id="RHEA:42608"/>
        <dbReference type="Rhea" id="RHEA-COMP:9561"/>
        <dbReference type="Rhea" id="RHEA-COMP:9562"/>
        <dbReference type="ChEBI" id="CHEBI:15378"/>
        <dbReference type="ChEBI" id="CHEBI:17757"/>
        <dbReference type="ChEBI" id="CHEBI:57540"/>
        <dbReference type="ChEBI" id="CHEBI:57945"/>
        <dbReference type="ChEBI" id="CHEBI:62192"/>
    </reaction>
</comment>
<comment type="catalytic activity">
    <reaction evidence="1">
        <text>a plastoquinone + NADPH + (n+1) H(+)(in) = a plastoquinol + NADP(+) + n H(+)(out)</text>
        <dbReference type="Rhea" id="RHEA:42612"/>
        <dbReference type="Rhea" id="RHEA-COMP:9561"/>
        <dbReference type="Rhea" id="RHEA-COMP:9562"/>
        <dbReference type="ChEBI" id="CHEBI:15378"/>
        <dbReference type="ChEBI" id="CHEBI:17757"/>
        <dbReference type="ChEBI" id="CHEBI:57783"/>
        <dbReference type="ChEBI" id="CHEBI:58349"/>
        <dbReference type="ChEBI" id="CHEBI:62192"/>
    </reaction>
</comment>
<comment type="subunit">
    <text evidence="1">NDH is composed of at least 16 different subunits, 5 of which are encoded in the nucleus.</text>
</comment>
<comment type="subcellular location">
    <subcellularLocation>
        <location evidence="1">Plastid</location>
        <location evidence="1">Chloroplast thylakoid membrane</location>
        <topology evidence="1">Multi-pass membrane protein</topology>
    </subcellularLocation>
</comment>
<comment type="similarity">
    <text evidence="1">Belongs to the complex I subunit 1 family.</text>
</comment>
<evidence type="ECO:0000255" key="1">
    <source>
        <dbReference type="HAMAP-Rule" id="MF_01350"/>
    </source>
</evidence>
<organism>
    <name type="scientific">Piper cenocladum</name>
    <name type="common">Ant piper</name>
    <dbReference type="NCBI Taxonomy" id="398741"/>
    <lineage>
        <taxon>Eukaryota</taxon>
        <taxon>Viridiplantae</taxon>
        <taxon>Streptophyta</taxon>
        <taxon>Embryophyta</taxon>
        <taxon>Tracheophyta</taxon>
        <taxon>Spermatophyta</taxon>
        <taxon>Magnoliopsida</taxon>
        <taxon>Magnoliidae</taxon>
        <taxon>Piperales</taxon>
        <taxon>Piperaceae</taxon>
        <taxon>Piper</taxon>
    </lineage>
</organism>
<sequence length="363" mass="39987">MIIDTTKVQAINSFSRSESLKEVIGLIWMLVPILTLVLAITIGVLVIVWLERQISAGIQQRIGPEYAGPLGILQAIADGTKLLFKEDILPSRGDIRLFSIGPSIAVISIILSYSVIPFSYHLVLADLGIGVFLWIAVSSIAPIGLLMSGYGSNNKYSFSGGLRAAAQSISYEIPLTLCVLSISLLSNSLSTIDIVEVQSKYGIWGWNLWRQPVGFIVFLISSLAECERLPFDLPEAEEELVAGYQTEYSGIKFGLFYVASYLNLLVSSLFVTVLYFGGWNLSIPYTSIFGLFGINQTSGVFGTTMGMFITLAKTYLFLFISVATRWTLPRMRMDQLLNLGWKFLLPISLGNLLLTTSFQLLSL</sequence>
<proteinExistence type="inferred from homology"/>
<dbReference type="EC" id="7.1.1.-" evidence="1"/>
<dbReference type="EMBL" id="DQ887677">
    <property type="protein sequence ID" value="ABI14521.1"/>
    <property type="molecule type" value="Genomic_DNA"/>
</dbReference>
<dbReference type="RefSeq" id="YP_784523.1">
    <property type="nucleotide sequence ID" value="NC_008457.1"/>
</dbReference>
<dbReference type="SMR" id="Q06GL0"/>
<dbReference type="GeneID" id="4363700"/>
<dbReference type="GO" id="GO:0009535">
    <property type="term" value="C:chloroplast thylakoid membrane"/>
    <property type="evidence" value="ECO:0007669"/>
    <property type="project" value="UniProtKB-SubCell"/>
</dbReference>
<dbReference type="GO" id="GO:0003954">
    <property type="term" value="F:NADH dehydrogenase activity"/>
    <property type="evidence" value="ECO:0007669"/>
    <property type="project" value="TreeGrafter"/>
</dbReference>
<dbReference type="GO" id="GO:0016655">
    <property type="term" value="F:oxidoreductase activity, acting on NAD(P)H, quinone or similar compound as acceptor"/>
    <property type="evidence" value="ECO:0007669"/>
    <property type="project" value="UniProtKB-UniRule"/>
</dbReference>
<dbReference type="GO" id="GO:0048038">
    <property type="term" value="F:quinone binding"/>
    <property type="evidence" value="ECO:0007669"/>
    <property type="project" value="UniProtKB-KW"/>
</dbReference>
<dbReference type="GO" id="GO:0009060">
    <property type="term" value="P:aerobic respiration"/>
    <property type="evidence" value="ECO:0007669"/>
    <property type="project" value="TreeGrafter"/>
</dbReference>
<dbReference type="GO" id="GO:0019684">
    <property type="term" value="P:photosynthesis, light reaction"/>
    <property type="evidence" value="ECO:0007669"/>
    <property type="project" value="UniProtKB-UniRule"/>
</dbReference>
<dbReference type="HAMAP" id="MF_01350">
    <property type="entry name" value="NDH1_NuoH"/>
    <property type="match status" value="1"/>
</dbReference>
<dbReference type="InterPro" id="IPR001694">
    <property type="entry name" value="NADH_UbQ_OxRdtase_su1/FPO"/>
</dbReference>
<dbReference type="InterPro" id="IPR018086">
    <property type="entry name" value="NADH_UbQ_OxRdtase_su1_CS"/>
</dbReference>
<dbReference type="NCBIfam" id="NF004741">
    <property type="entry name" value="PRK06076.1-2"/>
    <property type="match status" value="1"/>
</dbReference>
<dbReference type="PANTHER" id="PTHR11432">
    <property type="entry name" value="NADH DEHYDROGENASE SUBUNIT 1"/>
    <property type="match status" value="1"/>
</dbReference>
<dbReference type="PANTHER" id="PTHR11432:SF3">
    <property type="entry name" value="NADH-UBIQUINONE OXIDOREDUCTASE CHAIN 1"/>
    <property type="match status" value="1"/>
</dbReference>
<dbReference type="Pfam" id="PF00146">
    <property type="entry name" value="NADHdh"/>
    <property type="match status" value="1"/>
</dbReference>
<dbReference type="PROSITE" id="PS00667">
    <property type="entry name" value="COMPLEX1_ND1_1"/>
    <property type="match status" value="1"/>
</dbReference>
<dbReference type="PROSITE" id="PS00668">
    <property type="entry name" value="COMPLEX1_ND1_2"/>
    <property type="match status" value="1"/>
</dbReference>
<accession>Q06GL0</accession>
<geneLocation type="chloroplast"/>